<dbReference type="EMBL" id="AE014299">
    <property type="protein sequence ID" value="AAN56957.1"/>
    <property type="molecule type" value="Genomic_DNA"/>
</dbReference>
<dbReference type="RefSeq" id="NP_719513.1">
    <property type="nucleotide sequence ID" value="NC_004347.2"/>
</dbReference>
<dbReference type="RefSeq" id="WP_011073714.1">
    <property type="nucleotide sequence ID" value="NC_004347.2"/>
</dbReference>
<dbReference type="STRING" id="211586.SO_3983"/>
<dbReference type="PaxDb" id="211586-SO_3983"/>
<dbReference type="KEGG" id="son:SO_3983"/>
<dbReference type="PATRIC" id="fig|211586.12.peg.3865"/>
<dbReference type="eggNOG" id="COG3112">
    <property type="taxonomic scope" value="Bacteria"/>
</dbReference>
<dbReference type="HOGENOM" id="CLU_139226_0_0_6"/>
<dbReference type="OrthoDB" id="5739292at2"/>
<dbReference type="PhylomeDB" id="Q8EAC4"/>
<dbReference type="BioCyc" id="SONE211586:G1GMP-3692-MONOMER"/>
<dbReference type="Proteomes" id="UP000008186">
    <property type="component" value="Chromosome"/>
</dbReference>
<dbReference type="HAMAP" id="MF_01053">
    <property type="entry name" value="UPF0231"/>
    <property type="match status" value="1"/>
</dbReference>
<dbReference type="InterPro" id="IPR008249">
    <property type="entry name" value="UPF0231"/>
</dbReference>
<dbReference type="NCBIfam" id="NF003581">
    <property type="entry name" value="PRK05248.3-2"/>
    <property type="match status" value="1"/>
</dbReference>
<dbReference type="Pfam" id="PF06062">
    <property type="entry name" value="UPF0231"/>
    <property type="match status" value="1"/>
</dbReference>
<dbReference type="PIRSF" id="PIRSF006287">
    <property type="entry name" value="UCP006287"/>
    <property type="match status" value="1"/>
</dbReference>
<comment type="similarity">
    <text evidence="1">Belongs to the UPF0231 family.</text>
</comment>
<organism>
    <name type="scientific">Shewanella oneidensis (strain ATCC 700550 / JCM 31522 / CIP 106686 / LMG 19005 / NCIMB 14063 / MR-1)</name>
    <dbReference type="NCBI Taxonomy" id="211586"/>
    <lineage>
        <taxon>Bacteria</taxon>
        <taxon>Pseudomonadati</taxon>
        <taxon>Pseudomonadota</taxon>
        <taxon>Gammaproteobacteria</taxon>
        <taxon>Alteromonadales</taxon>
        <taxon>Shewanellaceae</taxon>
        <taxon>Shewanella</taxon>
    </lineage>
</organism>
<keyword id="KW-1185">Reference proteome</keyword>
<name>Y3983_SHEON</name>
<sequence>MEYEFRRNSLTGTFLASFSMDHEVLGQWFSEELGPELAKIQQVLDIIKEIQSGKRDSWRLIGKDFSLDLDEEQARIYANALGFEQDYELEEAMSLYDAESEAYCGLEDLEEALLSWYKFVQKGL</sequence>
<gene>
    <name type="ordered locus">SO_3983</name>
</gene>
<evidence type="ECO:0000255" key="1">
    <source>
        <dbReference type="HAMAP-Rule" id="MF_01053"/>
    </source>
</evidence>
<feature type="chain" id="PRO_0000214657" description="UPF0231 protein SO_3983">
    <location>
        <begin position="1"/>
        <end position="124"/>
    </location>
</feature>
<reference key="1">
    <citation type="journal article" date="2002" name="Nat. Biotechnol.">
        <title>Genome sequence of the dissimilatory metal ion-reducing bacterium Shewanella oneidensis.</title>
        <authorList>
            <person name="Heidelberg J.F."/>
            <person name="Paulsen I.T."/>
            <person name="Nelson K.E."/>
            <person name="Gaidos E.J."/>
            <person name="Nelson W.C."/>
            <person name="Read T.D."/>
            <person name="Eisen J.A."/>
            <person name="Seshadri R."/>
            <person name="Ward N.L."/>
            <person name="Methe B.A."/>
            <person name="Clayton R.A."/>
            <person name="Meyer T."/>
            <person name="Tsapin A."/>
            <person name="Scott J."/>
            <person name="Beanan M.J."/>
            <person name="Brinkac L.M."/>
            <person name="Daugherty S.C."/>
            <person name="DeBoy R.T."/>
            <person name="Dodson R.J."/>
            <person name="Durkin A.S."/>
            <person name="Haft D.H."/>
            <person name="Kolonay J.F."/>
            <person name="Madupu R."/>
            <person name="Peterson J.D."/>
            <person name="Umayam L.A."/>
            <person name="White O."/>
            <person name="Wolf A.M."/>
            <person name="Vamathevan J.J."/>
            <person name="Weidman J.F."/>
            <person name="Impraim M."/>
            <person name="Lee K."/>
            <person name="Berry K.J."/>
            <person name="Lee C."/>
            <person name="Mueller J."/>
            <person name="Khouri H.M."/>
            <person name="Gill J."/>
            <person name="Utterback T.R."/>
            <person name="McDonald L.A."/>
            <person name="Feldblyum T.V."/>
            <person name="Smith H.O."/>
            <person name="Venter J.C."/>
            <person name="Nealson K.H."/>
            <person name="Fraser C.M."/>
        </authorList>
    </citation>
    <scope>NUCLEOTIDE SEQUENCE [LARGE SCALE GENOMIC DNA]</scope>
    <source>
        <strain>ATCC 700550 / JCM 31522 / CIP 106686 / LMG 19005 / NCIMB 14063 / MR-1</strain>
    </source>
</reference>
<protein>
    <recommendedName>
        <fullName evidence="1">UPF0231 protein SO_3983</fullName>
    </recommendedName>
</protein>
<accession>Q8EAC4</accession>
<proteinExistence type="inferred from homology"/>